<feature type="chain" id="PRO_0000039833" description="Genome polyprotein">
    <location>
        <begin position="1"/>
        <end position="2332"/>
    </location>
</feature>
<feature type="chain" id="PRO_0000039834" description="Leader protease">
    <location>
        <begin position="1"/>
        <end position="201"/>
    </location>
</feature>
<feature type="chain" id="PRO_0000374074" description="Capsid protein VP0" evidence="8">
    <location>
        <begin position="202"/>
        <end position="504"/>
    </location>
</feature>
<feature type="chain" id="PRO_0000039837" description="Capsid protein VP4" evidence="8">
    <location>
        <begin position="202"/>
        <end position="286"/>
    </location>
</feature>
<feature type="chain" id="PRO_0000039838" description="Capsid protein VP2" evidence="8">
    <location>
        <begin position="287"/>
        <end position="504"/>
    </location>
</feature>
<feature type="chain" id="PRO_0000039839" description="Capsid protein VP3" evidence="8">
    <location>
        <begin position="505"/>
        <end position="725"/>
    </location>
</feature>
<feature type="chain" id="PRO_0000039840" description="Capsid protein VP1" evidence="8">
    <location>
        <begin position="726"/>
        <end position="936"/>
    </location>
</feature>
<feature type="chain" id="PRO_0000039841" description="Protein 2A" evidence="8">
    <location>
        <begin position="937"/>
        <end position="954"/>
    </location>
</feature>
<feature type="chain" id="PRO_0000039842" description="Protein 2B" evidence="8">
    <location>
        <begin position="955"/>
        <end position="1108"/>
    </location>
</feature>
<feature type="chain" id="PRO_0000039843" description="Protein 2C" evidence="8">
    <location>
        <begin position="1109"/>
        <end position="1426"/>
    </location>
</feature>
<feature type="chain" id="PRO_0000039844" description="Protein 3A" evidence="8">
    <location>
        <begin position="1427"/>
        <end position="1579"/>
    </location>
</feature>
<feature type="chain" id="PRO_0000039845" description="Protein 3B-1" evidence="8">
    <location>
        <begin position="1580"/>
        <end position="1602"/>
    </location>
</feature>
<feature type="chain" id="PRO_0000039846" description="Protein 3B-2" evidence="8">
    <location>
        <begin position="1603"/>
        <end position="1626"/>
    </location>
</feature>
<feature type="chain" id="PRO_0000039847" description="Protein 3B-3" evidence="8">
    <location>
        <begin position="1627"/>
        <end position="1650"/>
    </location>
</feature>
<feature type="chain" id="PRO_0000039848" description="Protease 3C" evidence="8">
    <location>
        <begin position="1651"/>
        <end position="1863"/>
    </location>
</feature>
<feature type="chain" id="PRO_0000039849" description="RNA-directed RNA polymerase 3D-POL" evidence="8">
    <location>
        <begin position="1864"/>
        <end position="2333"/>
    </location>
</feature>
<feature type="topological domain" description="Cytoplasmic" evidence="8">
    <location>
        <begin position="1"/>
        <end position="1481"/>
    </location>
</feature>
<feature type="intramembrane region" evidence="8">
    <location>
        <begin position="1482"/>
        <end position="1502"/>
    </location>
</feature>
<feature type="topological domain" description="Cytoplasmic" evidence="8">
    <location>
        <begin position="1503"/>
        <end position="2333"/>
    </location>
</feature>
<feature type="domain" description="Peptidase C28">
    <location>
        <begin position="1"/>
        <end position="201"/>
    </location>
</feature>
<feature type="domain" description="SF3 helicase" evidence="10">
    <location>
        <begin position="1190"/>
        <end position="1354"/>
    </location>
</feature>
<feature type="domain" description="Peptidase C3" evidence="11">
    <location>
        <begin position="1653"/>
        <end position="1849"/>
    </location>
</feature>
<feature type="domain" description="RdRp catalytic" evidence="9">
    <location>
        <begin position="2097"/>
        <end position="2215"/>
    </location>
</feature>
<feature type="region of interest" description="Disordered" evidence="12">
    <location>
        <begin position="199"/>
        <end position="218"/>
    </location>
</feature>
<feature type="region of interest" description="Disordered" evidence="12">
    <location>
        <begin position="238"/>
        <end position="265"/>
    </location>
</feature>
<feature type="region of interest" description="Antigenic epitope" evidence="2">
    <location>
        <begin position="789"/>
        <end position="797"/>
    </location>
</feature>
<feature type="region of interest" description="Disordered" evidence="12">
    <location>
        <begin position="1562"/>
        <end position="1589"/>
    </location>
</feature>
<feature type="short sequence motif" description="Cell attachment site" evidence="4">
    <location>
        <begin position="869"/>
        <end position="871"/>
    </location>
</feature>
<feature type="short sequence motif" description="Nuclear localization signal" evidence="6">
    <location>
        <begin position="1879"/>
        <end position="1887"/>
    </location>
</feature>
<feature type="compositionally biased region" description="Polar residues" evidence="12">
    <location>
        <begin position="204"/>
        <end position="218"/>
    </location>
</feature>
<feature type="compositionally biased region" description="Polar residues" evidence="12">
    <location>
        <begin position="238"/>
        <end position="251"/>
    </location>
</feature>
<feature type="compositionally biased region" description="Low complexity" evidence="12">
    <location>
        <begin position="252"/>
        <end position="265"/>
    </location>
</feature>
<feature type="active site" description="For leader protease activity" evidence="1">
    <location>
        <position position="51"/>
    </location>
</feature>
<feature type="active site" description="For leader protease activity" evidence="1">
    <location>
        <position position="148"/>
    </location>
</feature>
<feature type="active site" description="For leader protease activity" evidence="1">
    <location>
        <position position="163"/>
    </location>
</feature>
<feature type="active site" description="For protease 3C activity; Proton donor/acceptor" evidence="11">
    <location>
        <position position="1696"/>
    </location>
</feature>
<feature type="active site" description="For protease 3C activity" evidence="11">
    <location>
        <position position="1734"/>
    </location>
</feature>
<feature type="active site" description="For protease 3C activity" evidence="11">
    <location>
        <position position="1813"/>
    </location>
</feature>
<feature type="active site" description="For RdRp activity" evidence="7">
    <location>
        <position position="2200"/>
    </location>
</feature>
<feature type="binding site" evidence="10">
    <location>
        <begin position="1218"/>
        <end position="1225"/>
    </location>
    <ligand>
        <name>ATP</name>
        <dbReference type="ChEBI" id="CHEBI:30616"/>
    </ligand>
</feature>
<feature type="site" description="Cleavage; by leader protease" evidence="8">
    <location>
        <begin position="201"/>
        <end position="202"/>
    </location>
</feature>
<feature type="site" description="Cleavage" evidence="8">
    <location>
        <begin position="286"/>
        <end position="287"/>
    </location>
</feature>
<feature type="site" description="Cleavage; by picornain 3C" evidence="8">
    <location>
        <begin position="504"/>
        <end position="505"/>
    </location>
</feature>
<feature type="site" description="Cleavage; by picornain 3C" evidence="8">
    <location>
        <begin position="725"/>
        <end position="726"/>
    </location>
</feature>
<feature type="site" description="Cleavage; by picornain 3C" evidence="8">
    <location>
        <begin position="936"/>
        <end position="937"/>
    </location>
</feature>
<feature type="site" description="Cleavage; by ribosomal skip" evidence="8">
    <location>
        <begin position="954"/>
        <end position="955"/>
    </location>
</feature>
<feature type="site" description="Cleavage; by picornain 3C" evidence="8">
    <location>
        <begin position="1108"/>
        <end position="1109"/>
    </location>
</feature>
<feature type="site" description="Cleavage; by picornain 3C" evidence="8">
    <location>
        <begin position="1426"/>
        <end position="1427"/>
    </location>
</feature>
<feature type="site" description="Cleavage; by picornain 3C" evidence="8">
    <location>
        <begin position="1579"/>
        <end position="1580"/>
    </location>
</feature>
<feature type="site" description="Cleavage; by picornain 3C" evidence="8">
    <location>
        <begin position="1602"/>
        <end position="1603"/>
    </location>
</feature>
<feature type="site" description="Cleavage; by picornain 3C" evidence="8">
    <location>
        <begin position="1626"/>
        <end position="1627"/>
    </location>
</feature>
<feature type="site" description="Cleavage; by picornain 3C" evidence="8">
    <location>
        <begin position="1650"/>
        <end position="1651"/>
    </location>
</feature>
<feature type="site" description="Cleavage; by picornain 3C" evidence="8">
    <location>
        <begin position="1863"/>
        <end position="1864"/>
    </location>
</feature>
<feature type="modified residue" description="O-(5'-phospho-RNA)-tyrosine" evidence="4">
    <location>
        <position position="1582"/>
    </location>
</feature>
<feature type="modified residue" description="O-(5'-phospho-RNA)-tyrosine" evidence="4">
    <location>
        <position position="1605"/>
    </location>
</feature>
<feature type="modified residue" description="O-(5'-phospho-RNA)-tyrosine" evidence="4">
    <location>
        <position position="1629"/>
    </location>
</feature>
<feature type="lipid moiety-binding region" description="N-myristoyl glycine; by host" evidence="6">
    <location>
        <position position="202"/>
    </location>
</feature>
<feature type="disulfide bond" description="Interchain; in VP3 dimer" evidence="4">
    <location>
        <position position="511"/>
    </location>
</feature>
<feature type="splice variant" id="VSP_018980" description="In isoform Lb." evidence="14">
    <location>
        <begin position="1"/>
        <end position="28"/>
    </location>
</feature>
<feature type="sequence variant" description="In 119ab variant.">
    <original>SEV</original>
    <variation>AR</variation>
    <location>
        <begin position="122"/>
        <end position="124"/>
    </location>
</feature>
<feature type="sequence variant" description="In 119ab variant.">
    <original>D</original>
    <variation>N</variation>
    <location>
        <position position="131"/>
    </location>
</feature>
<feature type="sequence variant" description="In 119ab variant.">
    <original>G</original>
    <variation>E</variation>
    <location>
        <position position="145"/>
    </location>
</feature>
<feature type="sequence variant" description="In 119ab variant.">
    <original>T</original>
    <variation>P</variation>
    <location>
        <position position="357"/>
    </location>
</feature>
<feature type="sequence variant" description="In 119ab variant.">
    <original>LE</original>
    <variation>RT</variation>
    <location>
        <begin position="364"/>
        <end position="365"/>
    </location>
</feature>
<feature type="sequence variant" description="In 119ab variant.">
    <original>E</original>
    <variation>T</variation>
    <location>
        <position position="417"/>
    </location>
</feature>
<feature type="sequence variant" description="In 119ab variant.">
    <original>K</original>
    <variation>T</variation>
    <location>
        <position position="420"/>
    </location>
</feature>
<feature type="sequence variant" description="In 119ab variant.">
    <original>K</original>
    <variation>E</variation>
    <location>
        <position position="423"/>
    </location>
</feature>
<feature type="sequence variant" description="In 119ab variant.">
    <original>V</original>
    <variation>L</variation>
    <location>
        <position position="470"/>
    </location>
</feature>
<feature type="sequence variant" description="In 119ab variant.">
    <original>E</original>
    <variation>V</variation>
    <location>
        <position position="504"/>
    </location>
</feature>
<feature type="sequence variant" description="In 119ab variant.">
    <original>V</original>
    <variation>E</variation>
    <location>
        <position position="533"/>
    </location>
</feature>
<feature type="sequence variant" description="In 119ab variant.">
    <original>R</original>
    <variation>K</variation>
    <location>
        <position position="538"/>
    </location>
</feature>
<feature type="sequence variant" description="In 119ab variant.">
    <original>G</original>
    <variation>R</variation>
    <location>
        <position position="543"/>
    </location>
</feature>
<feature type="sequence variant" description="In 119ab variant.">
    <original>G</original>
    <variation>D</variation>
    <location>
        <position position="701"/>
    </location>
</feature>
<feature type="sequence variant" description="In 119ab variant.">
    <original>S</original>
    <variation>F</variation>
    <location>
        <position position="872"/>
    </location>
</feature>
<feature type="sequence variant" description="In 119ab variant.">
    <original>G</original>
    <variation>R</variation>
    <location>
        <position position="954"/>
    </location>
</feature>
<feature type="sequence variant" description="In 119ab variant.">
    <original>S</original>
    <variation>T</variation>
    <location>
        <position position="1034"/>
    </location>
</feature>
<feature type="sequence variant" description="In 119ab variant.">
    <original>F</original>
    <variation>L</variation>
    <location>
        <position position="1095"/>
    </location>
</feature>
<feature type="sequence variant" description="In 119ab variant.">
    <original>T</original>
    <variation>M</variation>
    <location>
        <position position="1151"/>
    </location>
</feature>
<feature type="sequence variant" description="In 119ab variant.">
    <original>P</original>
    <variation>L</variation>
    <location>
        <position position="1156"/>
    </location>
</feature>
<feature type="sequence variant" description="In 119ab variant.">
    <original>I</original>
    <variation>V</variation>
    <location>
        <position position="1356"/>
    </location>
</feature>
<feature type="sequence variant" description="In 119ab variant.">
    <original>G</original>
    <variation>S</variation>
    <location>
        <position position="1800"/>
    </location>
</feature>
<feature type="sequence variant" description="In 119ab variant.">
    <original>R</original>
    <variation>K</variation>
    <location>
        <position position="1846"/>
    </location>
</feature>
<feature type="sequence variant" description="In 119ab variant.">
    <original>H</original>
    <variation>Q</variation>
    <location>
        <position position="1861"/>
    </location>
</feature>
<feature type="sequence variant" description="In 119ab variant.">
    <original>R</original>
    <variation>A</variation>
    <location>
        <position position="1939"/>
    </location>
</feature>
<feature type="sequence variant" description="In 119ab variant.">
    <original>A</original>
    <variation>V</variation>
    <location>
        <position position="2021"/>
    </location>
</feature>
<feature type="sequence variant" description="In 119ab variant.">
    <original>A</original>
    <variation>T</variation>
    <location>
        <position position="2109"/>
    </location>
</feature>
<feature type="sequence variant" description="In 119ab variant.">
    <original>G</original>
    <variation>D</variation>
    <location>
        <position position="2162"/>
    </location>
</feature>
<feature type="sequence variant" description="In 119ab variant.">
    <original>S</original>
    <variation>G</variation>
    <location>
        <position position="2167"/>
    </location>
</feature>
<feature type="mutagenesis site" description="Complete loss of ability to inhibit host stress granules assembly." evidence="13">
    <original>C</original>
    <variation>A</variation>
    <location>
        <position position="51"/>
    </location>
</feature>
<feature type="helix" evidence="15">
    <location>
        <begin position="229"/>
        <end position="232"/>
    </location>
</feature>
<feature type="helix" evidence="15">
    <location>
        <begin position="268"/>
        <end position="275"/>
    </location>
</feature>
<proteinExistence type="evidence at protein level"/>
<protein>
    <recommendedName>
        <fullName>Genome polyprotein</fullName>
    </recommendedName>
    <component>
        <recommendedName>
            <fullName>Leader protease</fullName>
            <shortName>Lpro</shortName>
            <ecNumber evidence="4">3.4.22.46</ecNumber>
        </recommendedName>
    </component>
    <component>
        <recommendedName>
            <fullName>Capsid protein VP0</fullName>
        </recommendedName>
        <alternativeName>
            <fullName>VP4-VP2</fullName>
        </alternativeName>
    </component>
    <component>
        <recommendedName>
            <fullName>Capsid protein VP4</fullName>
        </recommendedName>
        <alternativeName>
            <fullName>P1A</fullName>
        </alternativeName>
        <alternativeName>
            <fullName>Virion protein 4</fullName>
        </alternativeName>
    </component>
    <component>
        <recommendedName>
            <fullName>Capsid protein VP2</fullName>
        </recommendedName>
        <alternativeName>
            <fullName>P1B</fullName>
        </alternativeName>
        <alternativeName>
            <fullName>Virion protein 2</fullName>
        </alternativeName>
    </component>
    <component>
        <recommendedName>
            <fullName>Capsid protein VP3</fullName>
        </recommendedName>
        <alternativeName>
            <fullName>P1C</fullName>
        </alternativeName>
        <alternativeName>
            <fullName>Virion protein 3</fullName>
        </alternativeName>
    </component>
    <component>
        <recommendedName>
            <fullName>Capsid protein VP1</fullName>
        </recommendedName>
        <alternativeName>
            <fullName>P1D</fullName>
        </alternativeName>
        <alternativeName>
            <fullName>Virion protein 1</fullName>
        </alternativeName>
    </component>
    <component>
        <recommendedName>
            <fullName>Protein 2A</fullName>
            <shortName>P2A</shortName>
        </recommendedName>
        <alternativeName>
            <fullName>P52</fullName>
        </alternativeName>
    </component>
    <component>
        <recommendedName>
            <fullName>Protein 2B</fullName>
            <shortName>P2B</shortName>
        </recommendedName>
    </component>
    <component>
        <recommendedName>
            <fullName>Protein 2C</fullName>
            <shortName>P2C</shortName>
            <ecNumber evidence="4">3.6.1.15</ecNumber>
        </recommendedName>
    </component>
    <component>
        <recommendedName>
            <fullName>Protein 3A</fullName>
            <shortName>P3A</shortName>
        </recommendedName>
    </component>
    <component>
        <recommendedName>
            <fullName>Protein 3B-1</fullName>
            <shortName>P3B-1</shortName>
        </recommendedName>
        <alternativeName>
            <fullName>Genome-linked protein VPg1</fullName>
        </alternativeName>
    </component>
    <component>
        <recommendedName>
            <fullName>Protein 3B-2</fullName>
            <shortName>P3B-2</shortName>
        </recommendedName>
        <alternativeName>
            <fullName>Genome-linked protein VPg2</fullName>
        </alternativeName>
    </component>
    <component>
        <recommendedName>
            <fullName>Protein 3B-3</fullName>
            <shortName>P3B-3</shortName>
        </recommendedName>
        <alternativeName>
            <fullName>Genome-linked protein VPg3</fullName>
        </alternativeName>
    </component>
    <component>
        <recommendedName>
            <fullName>Protease 3C</fullName>
            <ecNumber>3.4.22.28</ecNumber>
        </recommendedName>
        <alternativeName>
            <fullName>Picornain 3C</fullName>
            <shortName>P3C</shortName>
        </alternativeName>
        <alternativeName>
            <fullName>Protease P20B</fullName>
        </alternativeName>
    </component>
    <component>
        <recommendedName>
            <fullName>RNA-directed RNA polymerase 3D-POL</fullName>
            <shortName>P3D-POL</shortName>
            <ecNumber evidence="4">2.7.7.48</ecNumber>
        </recommendedName>
        <alternativeName>
            <fullName>P56A</fullName>
        </alternativeName>
    </component>
</protein>
<name>POLG_FMDVA</name>
<organism>
    <name type="scientific">Foot-and-mouth disease virus (isolate Bovine/United Kingdom/A12Valle119/1932 serotype A)</name>
    <name type="common">FMDV</name>
    <dbReference type="NCBI Taxonomy" id="12114"/>
    <lineage>
        <taxon>Viruses</taxon>
        <taxon>Riboviria</taxon>
        <taxon>Orthornavirae</taxon>
        <taxon>Pisuviricota</taxon>
        <taxon>Pisoniviricetes</taxon>
        <taxon>Picornavirales</taxon>
        <taxon>Picornaviridae</taxon>
        <taxon>Caphthovirinae</taxon>
        <taxon>Aphthovirus</taxon>
        <taxon>Foot-and-mouth disease virus</taxon>
    </lineage>
</organism>
<reference key="1">
    <citation type="journal article" date="1985" name="J. Virol.">
        <title>Nucleotide and amino acid sequence coding for polypeptides of foot-and-mouth disease virus type A12.</title>
        <authorList>
            <person name="Robertson B.H."/>
            <person name="Grubman M.J."/>
            <person name="Weddell G.N."/>
            <person name="Moore D.M."/>
            <person name="Welsh J.D."/>
            <person name="Fischer T."/>
            <person name="Dowbenko D.J."/>
            <person name="Yansura D.G."/>
            <person name="Small B."/>
            <person name="Kleid D.G."/>
        </authorList>
    </citation>
    <scope>NUCLEOTIDE SEQUENCE [GENOMIC RNA]</scope>
    <source>
        <strain>119ab variant</strain>
    </source>
</reference>
<reference key="2">
    <citation type="journal article" date="2005" name="J. Virol.">
        <title>Comparative genomics of foot-and-mouth disease virus.</title>
        <authorList>
            <person name="Carrillo C."/>
            <person name="Tulman E.R."/>
            <person name="Delhon G."/>
            <person name="Lu Z."/>
            <person name="Carreno A."/>
            <person name="Vagnozzi A."/>
            <person name="Kutish G.F."/>
            <person name="Rock D.L."/>
        </authorList>
    </citation>
    <scope>NUCLEOTIDE SEQUENCE [GENOMIC RNA]</scope>
</reference>
<reference key="3">
    <citation type="journal article" date="1983" name="Virology">
        <title>Identification of amino acid and nucleotide sequence of the foot-and-mouth disease virus RNA polymerase.</title>
        <authorList>
            <person name="Robertson B.H."/>
            <person name="Morgan D.O."/>
            <person name="Moore D.M."/>
            <person name="Grubman M.J."/>
            <person name="Card J."/>
            <person name="Fischer T."/>
            <person name="Weddell G.N."/>
            <person name="Dowbenko D.J."/>
            <person name="Yansura D.G."/>
        </authorList>
    </citation>
    <scope>NUCLEOTIDE SEQUENCE [GENOMIC RNA] OF 1863-2332</scope>
</reference>
<reference key="4">
    <citation type="journal article" date="1981" name="Science">
        <title>Cloned viral protein vaccine for foot-and-mouth disease: responses in cattle and swine.</title>
        <authorList>
            <person name="Kleid D.G."/>
            <person name="Yansura D.G."/>
            <person name="Small B."/>
            <person name="Dowbenko D.J."/>
            <person name="Moore D.M."/>
            <person name="Grubman M.J."/>
            <person name="McKercher P.D."/>
            <person name="Morgan D.O."/>
            <person name="Robertson B.H."/>
            <person name="Bachrach H.L."/>
        </authorList>
    </citation>
    <scope>NUCLEOTIDE SEQUENCE [GENOMIC RNA] OF 715-955</scope>
</reference>
<reference key="5">
    <citation type="journal article" date="1987" name="Nucleic Acids Res.">
        <title>All foot and mouth disease virus serotypes initiate protein synthesis at two separate AUGs.</title>
        <authorList>
            <person name="Sangar D.V."/>
            <person name="Newton S.E."/>
            <person name="Rowlands D.J."/>
            <person name="Clarke B.E."/>
        </authorList>
    </citation>
    <scope>ALTERNATIVE INITIATION</scope>
</reference>
<reference key="6">
    <citation type="journal article" date="2019" name="J. Virol.">
        <title>Foot-and-Mouth Disease Virus Leader Protease Cleaves G3BP1 and G3BP2 and Inhibits Stress Granule Formation.</title>
        <authorList>
            <person name="Visser L.J."/>
            <person name="Medina G.N."/>
            <person name="Rabouw H.H."/>
            <person name="de Groot R.J."/>
            <person name="Langereis M.A."/>
            <person name="de Los Santos T."/>
            <person name="van Kuppeveld F.J.M."/>
        </authorList>
    </citation>
    <scope>FUNCTION (LEADER PROTEASE)</scope>
    <scope>SUBCELLULAR LOCATION (PROTEIN VP1)</scope>
    <scope>MUTAGENESIS OF CYS-51</scope>
</reference>
<sequence length="2333" mass="259162">MNTTNCFIALVHAIREIRAFFLSRATGKMEFTLYNGERKTFYSRPNNHDNCWLNTILQLFRYVDEPFFDWVYNSPENLTLAAIKQLEELTGLELHEGGPPALVIWNIKHLLQTGIGTASRPSEVCMVDGTDMCLADFHAGIFLKGQEHAVFACVTSNGWYAIDDEDFYPWTPDPSDVLVFVPYDQEPLNGGWKANVQRKLKGAGQSSPATGSQNQSGNTGSIINNYYMQQYQNSMDTQLGDNAISGGSNEGSTDTTSTHTTNTQNNDWFSKLASSAFTGLFGALLADKKTEETTLLEDRILTTRNGHTTSTTQSSVGVTYGYSTEEDHVAGPNTSGLETRVVQAERFFKKFLFDWTTDKPFGHLEKLELPTDHHGVFGHLVDSYAYMRNGWDVEVSAVGNQFNGGCLLVAMVPEWKEFDKREKYQLTLFPHQFISPRTNMTAHITVPYLGVNRYDQYKKHKPWTLVIMVVSPLTVSNTAATQIKVYANIAPTYVHVAGELPSKEGIFPVACSDGYGGLVTTDPKTADPVYGKVYNPPRTNYPGRFTNLLDVAEACPTFLCFDDGKPYVVTRTDDTRLLAKFDVSLAAKHMSNTYLSGIAQYYTQYSGTINLHFMFTGSTDSKARYMVAYIPPGVETPPETPEGAAHCIHAEWDTGLNSKFTFSIPYVSAADYAYTASDTAETTNVQGWVCIYQITHGKAEGDTLVVSASAGKDFELRLPIDPRSQTTATGESADPVTTTVENYGGETQVQRRHHTDVSFIMDRFVKIKSLNPTHVIDLMQTHQHGLVGALLRAATYYFSDLEIVVRHDGNLTWVPNGAPEAALSNTGNPTAYNKAPFTRLALPYTAPHRVLATVYNGTNKYSASGSGVRGDSGSLAPRVARQLPASFNYGAIKAETIHELLVRMKRAELYCPRPLLAIEVSSQDRHKQKIIAPGKQLLNFDLLKLAGDVESNPGPFFFADVRSNFSKLVDTINQMQEDMSTKHGPDFNRLVSAFEELATGVKAIRTGLDEAKPWYKLIKLLSRLSCMAAVAARSKDPVLVAIMLADTGLEILDSTFVVKKISDSLSSLFHVPAPVFSFGAPVLLAGLVKVASSFFRSTPEDLERAEKQLKARDINDIFAILKNGEWLVKLILAIRDWIKAWIASEEKFVTTTDLVPGILEKQRDLNDPSKYKEAKEWLDNARQACLKSGNVHIANLCKVVAPAPSKSRPEPVVVCLRGKSGQGKSFLANVLAQAISTHFTGRTDSVWYCPPDPDHFDGYNQQTVVVMDDLGQNPDGKDFKYFAQMVSTTGFIPPMASLEDKGKPFNSKVIIATTNLYSGFTPRTMVCPDALNRRFHFDIDVSAKDGYKINNKLDIIKALEDTHTNPVAMFQYDCALLNGMAVEMKRMQQDMFKPQPPLQNVYQLVQEVIERVELHEKVSSHPIFKQISIPSQKSVLYFLIEKGQHEAAIEFFEGMVHDSIKEELRPLIQQTSFVKRAFKRLKENFEIVALCLTLLANIVIMIRETRKRQKMVDDAVNEYIEKANITTDDTTLDEAEKNPLETSGASTVGFRERTLTGQRACNDVNSEPARPAEEQPQAEGPYTGPLERQRPLKVRAKLPQQEGPYAGPLERQKPLKVKAKAPVVKEGPYEGPVKKPVALKVKAKNLIVTESGAPPTDLQKMVMGNTKPVELILDGKTVAICCATGVFGTAYLVPRHLFAEKYDKIMLDGRAMTDSDYRVFEFEIKVKGQDMLSDAALMVLHRGNRVRDITKHFRDTARMKKGTPVVGVVNNADVGRLIFSGEALTYKDIVVCMDGDTMPGLFAYKAATKAGYCGGAVLAKDGADTFIVGTHSAGGNGVGYCSCVSRSMLLRMKAHVDPEPHHEGLIVDTRDVEERVHVMRKTKLAPTVAHGVFNPEFGPAALSNKDPRLNEGVVLDEVIFSKHKGDTKMSAEDKALFRRCAADYASRLHSVLGTANAPLSIYEAIKGVDGLDAMESDTAPGLPWAFQGKRRGALIDFENGTVGPEVEAALKLMEKREYKFACQTFLKDEIRPMEKVRAGKTRIVDVLPVEHILYTRMMIGRFCAQMHSNNGPQIGSAVGCNPDVDWQRFGTHFAQYRNVWDVDYSAFDANHCSDAMNIMFEEVFRTDFGFHPNAEWILKTLVNTEHAYENKRITVEGGMPSGCSATSIINTILNNIYVLYALRRHYEGVELDTYTMISYGDDIVVASDYDLDFEALKPHFKSLGQTITPADKSDKGFVLGHSITDVTFLKRHFHIDYGTGFYKPVMASKTLEAILSFARRGTIQEKLTSVAGLAVHSGPDEYRRLFEPFQGLFEIPSYRSLYLRWVNAVCGDA</sequence>
<comment type="function">
    <molecule>Leader protease</molecule>
    <text evidence="4 13">Autocatalytically cleaves itself from the polyprotein at the L/VP0 junction. Also cleaves the host translation initiation factors EIF4G1 and EIF4G3, in order to shut off the capped cellular mRNA transcription. Plays a role in counteracting host innate antiviral response using diverse mechanisms. Possesses a deubiquitinase activity acting on both 'Lys-48' and 'Lys-63'-linked polyubiquitin chains. In turn, inhibits the ubiquitination and subsequent activation of key signaling molecules of type I IFN response such as host RIGI, TBK1, TRAF3 and TRAF6. Inhibits host NF-kappa-B activity by inducing a decrease in RELA mRNA levels. Cleaves a peptide bond in the C-terminus of host ISG15, resulting in the damaging of this modifier that can no longer be attached to target proteins. Also cleaves host G3BP1 and G3BP2 in order to inhibit cytoplasmic stress granules assembly (PubMed:30404792).</text>
</comment>
<comment type="function">
    <molecule>Capsid protein VP4</molecule>
    <text evidence="3">Lies on the inner surface of the capsid shell. After binding to the host receptor, the capsid undergoes conformational changes. Capsid protein VP4 is released, capsid protein VP1 N-terminus is externalized, and together, they shape a pore in the host membrane through which the viral genome is translocated into the host cell cytoplasm. After genome has been released, the channel shrinks.</text>
</comment>
<comment type="function">
    <molecule>Capsid protein VP2</molecule>
    <text evidence="4 5">Forms an icosahedral capsid of pseudo T=3 symmetry with capsid proteins VP1 and VP3. The capsid is composed of 60 copies of each capsid protein organized in the form of twelve pentamers and encloses the viral positive strand RNA genome (By similarity). Upon acidifcation in the endosome, dissociates into pentamers (By similarity).</text>
</comment>
<comment type="function">
    <molecule>Capsid protein VP3</molecule>
    <text evidence="4 5">Forms an icosahedral capsid of pseudo T=3 symmetry with capsid proteins VP0 and VP3. The capsid is composed of 60 copies of each capsid protein organized in the form of twelve pentamers and encloses the viral positive strand RNA genome (By similarity). Upon acidifcation in the endosome, dissociates into pentamers (By similarity).</text>
</comment>
<comment type="function">
    <molecule>Capsid protein VP1</molecule>
    <text evidence="4 5">Forms an icosahedral capsid of pseudo T=3 symmetry with capsid proteins VP2 and VP3. The capsid is composed of 60 copies of each capsid protein organized in the form of twelve pentamers and encloses the viral positive strand RNA genome. Mediates cell entry by attachment to an integrin receptor, usually host ITGAV/ITGB6. In addition, targets host MAVS to suppress type I IFN pathway (By similarity). Upon acidifcation in the endosome, dissociates into pentamers (By similarity).</text>
</comment>
<comment type="function">
    <molecule>Protein 2A</molecule>
    <text evidence="4">Mediates self-processing of the polyprotein by a translational effect termed 'ribosome skipping'. Mechanistically, 2A-mediated cleavage occurs between the C-terminal glycine and the proline of the downstream protein 2B. In the case of foot-and-mouth disease virus, the 2A oligopeptide is post-translationally 'trimmed' from the C-terminus of the upstream protein 1D by 3C proteinase.</text>
</comment>
<comment type="function">
    <molecule>Protein 2B</molecule>
    <text evidence="4">Plays an essential role in the virus replication cycle by acting as a viroporin. Creates a pore in the host endoplasmic reticulum and as a consequence releases Ca2+ in the cytoplasm of infected cell. In turn, high levels of cytoplasmic calcium may trigger membrane trafficking and transport of viral ER-associated proteins to viroplasms, sites of viral genome replication.</text>
</comment>
<comment type="function">
    <molecule>Protein 2C</molecule>
    <text evidence="4">Associates with and induces structural rearrangements of intracellular membranes. Triggers host autophagy by interacting with host BECN1 and thereby promotes viral replication. Participates in viral replication and interacts with host DHX9. Displays RNA-binding, nucleotide binding and NTPase activities. May play a role in virion morphogenesis and viral RNA encapsidation by interacting with the capsid protein VP3.</text>
</comment>
<comment type="function">
    <molecule>Protein 3A</molecule>
    <text evidence="4">Plays important roles in virus replication, virulence and host range.</text>
</comment>
<comment type="function">
    <molecule>Protein 3B-1</molecule>
    <text evidence="4">Covalently linked to the 5'-end of both the positive-strand and negative-strand genomic RNAs. Acts as a genome-linked replication primer.</text>
</comment>
<comment type="function">
    <molecule>Protein 3B-2</molecule>
    <text evidence="4">Covalently linked to the 5'-end of both the positive-strand and negative-strand genomic RNAs. Acts as a genome-linked replication primer.</text>
</comment>
<comment type="function">
    <molecule>Protein 3B-3</molecule>
    <text evidence="4">Covalently linked to the 5'-end of both the positive-strand and negative-strand genomic RNAs. Acts as a genome-linked replication primer.</text>
</comment>
<comment type="function">
    <molecule>Protease 3C</molecule>
    <text evidence="4">Cysteine protease that generates mature viral proteins from the precursor polyprotein. In addition to its proteolytic activity, binds to viral RNA and thus influences viral genome replication. RNA and substrate bind cooperatively to the protease.</text>
</comment>
<comment type="function">
    <text evidence="4">RNA-directed RNA polymerase 3D-POL replicates genomic and antigenomic RNA by recognizing replications specific signals. Covalently attaches UMP to a tyrosine of VPg, which is used to prime RNA synthesis. The positive stranded RNA genome is first replicated at virus induced membranous vesicles, creating a dsRNA genomic replication form. This dsRNA is then used as template to synthesize positive stranded RNA genomes. ss(+)RNA genomes are either translated, replicated or encapsidated.</text>
</comment>
<comment type="catalytic activity">
    <molecule>Leader protease</molecule>
    <reaction>
        <text>Autocatalytically cleaves itself from the polyprotein of the foot-and-mouth disease virus by hydrolysis of a Lys-|-Gly bond, but then cleaves host cell initiation factor eIF-4G at bonds -Gly-|-Arg- and -Lys-|-Arg-.</text>
        <dbReference type="EC" id="3.4.22.46"/>
    </reaction>
</comment>
<comment type="catalytic activity">
    <molecule>Protein 2C</molecule>
    <reaction evidence="4">
        <text>a ribonucleoside 5'-triphosphate + H2O = a ribonucleoside 5'-diphosphate + phosphate + H(+)</text>
        <dbReference type="Rhea" id="RHEA:23680"/>
        <dbReference type="ChEBI" id="CHEBI:15377"/>
        <dbReference type="ChEBI" id="CHEBI:15378"/>
        <dbReference type="ChEBI" id="CHEBI:43474"/>
        <dbReference type="ChEBI" id="CHEBI:57930"/>
        <dbReference type="ChEBI" id="CHEBI:61557"/>
        <dbReference type="EC" id="3.6.1.15"/>
    </reaction>
</comment>
<comment type="catalytic activity">
    <molecule>RNA-directed RNA polymerase 3D-POL</molecule>
    <reaction evidence="9">
        <text>RNA(n) + a ribonucleoside 5'-triphosphate = RNA(n+1) + diphosphate</text>
        <dbReference type="Rhea" id="RHEA:21248"/>
        <dbReference type="Rhea" id="RHEA-COMP:14527"/>
        <dbReference type="Rhea" id="RHEA-COMP:17342"/>
        <dbReference type="ChEBI" id="CHEBI:33019"/>
        <dbReference type="ChEBI" id="CHEBI:61557"/>
        <dbReference type="ChEBI" id="CHEBI:140395"/>
        <dbReference type="EC" id="2.7.7.48"/>
    </reaction>
</comment>
<comment type="catalytic activity">
    <molecule>Protease 3C</molecule>
    <reaction evidence="11">
        <text>Selective cleavage of Gln-|-Gly bond in the poliovirus polyprotein. In other picornavirus reactions Glu may be substituted for Gln, and Ser or Thr for Gly.</text>
        <dbReference type="EC" id="3.4.22.28"/>
    </reaction>
</comment>
<comment type="subunit">
    <molecule>Leader protease</molecule>
    <text evidence="4">Interacts with host ISG15.</text>
</comment>
<comment type="subunit">
    <molecule>Capsid protein VP1</molecule>
    <text evidence="4">Interacts (via R-G-D motif) with host ITGAV/ITGB6 (By similarity). Interacts with host MAVS; this interaction inhibits binding of host TRAF3 to MAVS, thereby suppressing interferon-mediated responses (By similarity).</text>
</comment>
<comment type="subunit">
    <molecule>Protein 2B</molecule>
    <text evidence="4">Forms homooligomers.</text>
</comment>
<comment type="subunit">
    <molecule>Protein 2C</molecule>
    <text evidence="4">Homohexamer. Interacts with host VIM. Interacts with host BECN1.</text>
</comment>
<comment type="subunit">
    <molecule>Protein 3A</molecule>
    <text evidence="4">Interacts with host DCTN3.</text>
</comment>
<comment type="subunit">
    <molecule>Protein 3B-1</molecule>
    <text evidence="6">Interacts with RNA-dependent RNA polymerase; this interaction allows 3B-1 to binds 2 polymerases and act as a primer. It also allows the recruitment of the RNA-dependent RNA polymerase to host membranes.</text>
</comment>
<comment type="subunit">
    <molecule>Protein 3B-2</molecule>
    <text evidence="6">Interacts with RNA-dependent RNA polymerase; this interaction allows 3B-2 to act as a primer.</text>
</comment>
<comment type="subunit">
    <molecule>Protein 3B-3</molecule>
    <text evidence="6">Interacts with RNA-dependent RNA polymerase; this interaction allows 3B-3 to act as a primer.</text>
</comment>
<comment type="subunit">
    <molecule>RNA-directed RNA polymerase 3D-POL</molecule>
    <text evidence="6">Interacts with 3B-1; this interaction allows 3B-1 to binds 2 polymerases and act as a primer. It also allows the recruitment of the RNA-dependent RNA polymerase to host membranes (By similarity). Interacts with 3B-2; this interaction allows 3B-2 to act as a primer (By similarity). Interacts with 3B-3; this interaction allows 3B-3 to act as a primer (By similarity).</text>
</comment>
<comment type="subcellular location">
    <molecule>Leader protease</molecule>
    <subcellularLocation>
        <location evidence="4">Host nucleus</location>
    </subcellularLocation>
    <subcellularLocation>
        <location evidence="4">Host cytoplasm</location>
    </subcellularLocation>
</comment>
<comment type="subcellular location">
    <molecule>Capsid protein VP2</molecule>
    <subcellularLocation>
        <location evidence="4">Virion</location>
    </subcellularLocation>
    <subcellularLocation>
        <location evidence="14">Host cytoplasm</location>
    </subcellularLocation>
</comment>
<comment type="subcellular location">
    <molecule>Capsid protein VP3</molecule>
    <subcellularLocation>
        <location evidence="4">Virion</location>
    </subcellularLocation>
    <subcellularLocation>
        <location evidence="14">Host cytoplasm</location>
    </subcellularLocation>
</comment>
<comment type="subcellular location">
    <molecule>Capsid protein VP1</molecule>
    <subcellularLocation>
        <location evidence="4">Virion</location>
    </subcellularLocation>
    <subcellularLocation>
        <location evidence="13">Host cytoplasm</location>
    </subcellularLocation>
</comment>
<comment type="subcellular location">
    <molecule>Protein 2B</molecule>
    <subcellularLocation>
        <location evidence="4">Host endoplasmic reticulum membrane</location>
    </subcellularLocation>
</comment>
<comment type="subcellular location">
    <molecule>Protein 2C</molecule>
    <subcellularLocation>
        <location evidence="14">Host cytoplasmic vesicle membrane</location>
        <topology evidence="14">Peripheral membrane protein</topology>
        <orientation evidence="14">Cytoplasmic side</orientation>
    </subcellularLocation>
    <text evidence="1">Probably localizes to the surface of intracellular membrane vesicles that are induced after virus infection as the site for viral RNA replication. These vesicles are derived from the endoplasmic reticulum (By similarity).</text>
</comment>
<comment type="subcellular location">
    <molecule>Protein 3A</molecule>
    <subcellularLocation>
        <location evidence="14">Host cytoplasmic vesicle membrane</location>
        <topology evidence="14">Peripheral membrane protein</topology>
        <orientation evidence="14">Cytoplasmic side</orientation>
    </subcellularLocation>
    <text evidence="1">Probably localizes to the surface of intracellular membrane vesicles that are induced after virus infection as the site for viral RNA replication. These vesicles are derived from the endoplasmic reticulum (By similarity).</text>
</comment>
<comment type="subcellular location">
    <molecule>Protein 3B-1</molecule>
    <subcellularLocation>
        <location evidence="14">Virion</location>
    </subcellularLocation>
</comment>
<comment type="subcellular location">
    <molecule>Protein 3B-2</molecule>
    <subcellularLocation>
        <location evidence="14">Virion</location>
    </subcellularLocation>
</comment>
<comment type="subcellular location">
    <molecule>Protein 3B-3</molecule>
    <subcellularLocation>
        <location evidence="14">Virion</location>
    </subcellularLocation>
</comment>
<comment type="subcellular location">
    <molecule>Protease 3C</molecule>
    <subcellularLocation>
        <location evidence="14">Host cytoplasm</location>
    </subcellularLocation>
</comment>
<comment type="subcellular location">
    <molecule>RNA-directed RNA polymerase 3D-POL</molecule>
    <subcellularLocation>
        <location evidence="14">Host cytoplasmic vesicle membrane</location>
        <topology evidence="14">Peripheral membrane protein</topology>
        <orientation evidence="14">Cytoplasmic side</orientation>
    </subcellularLocation>
    <text evidence="1">Probably localizes to the surface of intracellular membrane vesicles that are induced after virus infection as the site for viral RNA replication. These vesicles are derived from the endoplasmic reticulum (By similarity).</text>
</comment>
<comment type="alternative products">
    <event type="alternative initiation"/>
    <isoform>
        <id>P03308-1</id>
        <name>Lab</name>
        <sequence type="displayed"/>
    </isoform>
    <isoform>
        <id>P03308-2</id>
        <name>Lb</name>
        <sequence type="described" ref="VSP_018980"/>
    </isoform>
</comment>
<comment type="PTM">
    <molecule>Leader protease</molecule>
    <text evidence="4">Removes six residues from its own C-terminus, generating sLb(pro).</text>
</comment>
<comment type="PTM">
    <molecule>Genome polyprotein</molecule>
    <text evidence="4">Specific enzymatic cleavages in vivo by the viral proteases yield a variety of precursors and mature proteins. The polyprotein seems to be cotranslationally cleaved at the 2A/2B junction by a ribosomal skip from one codon to the next without formation of a peptide bond. This process would release the L-P1-2A peptide from the translational complex.</text>
</comment>
<comment type="PTM">
    <molecule>Capsid protein VP0</molecule>
    <text evidence="4">During virion maturation, immature virions are rendered infectious following cleavage of VP0 into VP4 and VP2. This maturation seems to be an autocatalytic event triggered by the presence of RNA in the capsid and is followed by a conformational change of the particle.</text>
</comment>
<comment type="PTM">
    <molecule>Capsid protein VP4</molecule>
    <text evidence="6">Myristoylation is required during RNA encapsidation and formation of the mature virus particle.</text>
</comment>
<comment type="PTM">
    <molecule>Protein 3B-1</molecule>
    <text evidence="4">Uridylylated by the polymerase and covalently linked to the 5'-end of genomic RNA. These uridylylated forms act as a nucleotide-peptide primer for the polymerase.</text>
</comment>
<comment type="PTM">
    <molecule>Protein 3B-2</molecule>
    <text evidence="4">Uridylylated by the polymerase and covalently linked to the 5'-end of genomic RNA. These uridylylated forms act as a nucleotide-peptide primer for the polymerase.</text>
</comment>
<comment type="PTM">
    <molecule>Protein 3B-3</molecule>
    <text evidence="4">Uridylylated by the polymerase and covalently linked to the 5'-end of genomic RNA. These uridylylated forms act as a nucleotide-peptide primer for the polymerase.</text>
</comment>
<comment type="miscellaneous">
    <molecule>Capsid protein VP1</molecule>
    <text evidence="14">Contains the main antigenic determinants of the virion; therefore, changes in its sequence must be responsible for the high antigenic variability of the virus.</text>
</comment>
<comment type="miscellaneous">
    <text evidence="1">The capsid protein VP1 contains the main antigenic determinants of the virion; therefore, changes in its sequence must be responsible for the high antigenic variability of the virus.</text>
</comment>
<comment type="similarity">
    <text evidence="14">Belongs to the picornaviruses polyprotein family.</text>
</comment>
<keyword id="KW-0002">3D-structure</keyword>
<keyword id="KW-0024">Alternative initiation</keyword>
<keyword id="KW-0067">ATP-binding</keyword>
<keyword id="KW-0167">Capsid protein</keyword>
<keyword id="KW-1165">Clathrin-mediated endocytosis of virus by host</keyword>
<keyword id="KW-0191">Covalent protein-RNA linkage</keyword>
<keyword id="KW-1015">Disulfide bond</keyword>
<keyword id="KW-0347">Helicase</keyword>
<keyword id="KW-1035">Host cytoplasm</keyword>
<keyword id="KW-1036">Host cytoplasmic vesicle</keyword>
<keyword id="KW-1038">Host endoplasmic reticulum</keyword>
<keyword id="KW-1043">Host membrane</keyword>
<keyword id="KW-1048">Host nucleus</keyword>
<keyword id="KW-0945">Host-virus interaction</keyword>
<keyword id="KW-0378">Hydrolase</keyword>
<keyword id="KW-0407">Ion channel</keyword>
<keyword id="KW-0406">Ion transport</keyword>
<keyword id="KW-0449">Lipoprotein</keyword>
<keyword id="KW-0472">Membrane</keyword>
<keyword id="KW-1122">Modulation of host chromatin by virus</keyword>
<keyword id="KW-0519">Myristate</keyword>
<keyword id="KW-0547">Nucleotide-binding</keyword>
<keyword id="KW-0548">Nucleotidyltransferase</keyword>
<keyword id="KW-0597">Phosphoprotein</keyword>
<keyword id="KW-0645">Protease</keyword>
<keyword id="KW-0694">RNA-binding</keyword>
<keyword id="KW-0696">RNA-directed RNA polymerase</keyword>
<keyword id="KW-1143">T=pseudo3 icosahedral capsid protein</keyword>
<keyword id="KW-0788">Thiol protease</keyword>
<keyword id="KW-0808">Transferase</keyword>
<keyword id="KW-0810">Translation regulation</keyword>
<keyword id="KW-0813">Transport</keyword>
<keyword id="KW-1161">Viral attachment to host cell</keyword>
<keyword id="KW-1182">Viral ion channel</keyword>
<keyword id="KW-1162">Viral penetration into host cytoplasm</keyword>
<keyword id="KW-0693">Viral RNA replication</keyword>
<keyword id="KW-0946">Virion</keyword>
<keyword id="KW-1164">Virus endocytosis by host</keyword>
<keyword id="KW-1160">Virus entry into host cell</keyword>
<evidence type="ECO:0000250" key="1"/>
<evidence type="ECO:0000250" key="2">
    <source>
        <dbReference type="UniProtKB" id="A2I7M2"/>
    </source>
</evidence>
<evidence type="ECO:0000250" key="3">
    <source>
        <dbReference type="UniProtKB" id="P03300"/>
    </source>
</evidence>
<evidence type="ECO:0000250" key="4">
    <source>
        <dbReference type="UniProtKB" id="P03305"/>
    </source>
</evidence>
<evidence type="ECO:0000250" key="5">
    <source>
        <dbReference type="UniProtKB" id="P03306"/>
    </source>
</evidence>
<evidence type="ECO:0000250" key="6">
    <source>
        <dbReference type="UniProtKB" id="P03311"/>
    </source>
</evidence>
<evidence type="ECO:0000250" key="7">
    <source>
        <dbReference type="UniProtKB" id="P12296"/>
    </source>
</evidence>
<evidence type="ECO:0000255" key="8"/>
<evidence type="ECO:0000255" key="9">
    <source>
        <dbReference type="PROSITE-ProRule" id="PRU00539"/>
    </source>
</evidence>
<evidence type="ECO:0000255" key="10">
    <source>
        <dbReference type="PROSITE-ProRule" id="PRU00551"/>
    </source>
</evidence>
<evidence type="ECO:0000255" key="11">
    <source>
        <dbReference type="PROSITE-ProRule" id="PRU01222"/>
    </source>
</evidence>
<evidence type="ECO:0000256" key="12">
    <source>
        <dbReference type="SAM" id="MobiDB-lite"/>
    </source>
</evidence>
<evidence type="ECO:0000269" key="13">
    <source>
    </source>
</evidence>
<evidence type="ECO:0000305" key="14"/>
<evidence type="ECO:0007829" key="15">
    <source>
        <dbReference type="PDB" id="7D3R"/>
    </source>
</evidence>
<organismHost>
    <name type="scientific">Bos taurus</name>
    <name type="common">Bovine</name>
    <dbReference type="NCBI Taxonomy" id="9913"/>
</organismHost>
<organismHost>
    <name type="scientific">Capra hircus</name>
    <name type="common">Goat</name>
    <dbReference type="NCBI Taxonomy" id="9925"/>
</organismHost>
<organismHost>
    <name type="scientific">Cervidae</name>
    <name type="common">Deer</name>
    <dbReference type="NCBI Taxonomy" id="9850"/>
</organismHost>
<organismHost>
    <name type="scientific">Erinaceidae</name>
    <name type="common">hedgehogs</name>
    <dbReference type="NCBI Taxonomy" id="9363"/>
</organismHost>
<organismHost>
    <name type="scientific">Loxodonta africana</name>
    <name type="common">African elephant</name>
    <dbReference type="NCBI Taxonomy" id="9785"/>
</organismHost>
<organismHost>
    <name type="scientific">Ovis aries</name>
    <name type="common">Sheep</name>
    <dbReference type="NCBI Taxonomy" id="9940"/>
</organismHost>
<organismHost>
    <name type="scientific">Rattus norvegicus</name>
    <name type="common">Rat</name>
    <dbReference type="NCBI Taxonomy" id="10116"/>
</organismHost>
<organismHost>
    <name type="scientific">Sus scrofa</name>
    <name type="common">Pig</name>
    <dbReference type="NCBI Taxonomy" id="9823"/>
</organismHost>
<dbReference type="EC" id="3.4.22.46" evidence="4"/>
<dbReference type="EC" id="3.6.1.15" evidence="4"/>
<dbReference type="EC" id="3.4.22.28"/>
<dbReference type="EC" id="2.7.7.48" evidence="4"/>
<dbReference type="EMBL" id="M10975">
    <property type="protein sequence ID" value="AAA42593.1"/>
    <property type="molecule type" value="Genomic_RNA"/>
</dbReference>
<dbReference type="EMBL" id="AY593752">
    <property type="protein sequence ID" value="AAT01695.1"/>
    <property type="molecule type" value="Genomic_RNA"/>
</dbReference>
<dbReference type="EMBL" id="J02187">
    <property type="protein sequence ID" value="AAA42670.1"/>
    <property type="molecule type" value="Genomic_RNA"/>
</dbReference>
<dbReference type="PIR" id="A25794">
    <property type="entry name" value="GNNY4F"/>
</dbReference>
<dbReference type="PDB" id="1BCV">
    <property type="method" value="NMR"/>
    <property type="chains" value="A=865-883"/>
</dbReference>
<dbReference type="PDB" id="7D3R">
    <property type="method" value="EM"/>
    <property type="resolution" value="3.49 A"/>
    <property type="chains" value="4=202-286"/>
</dbReference>
<dbReference type="PDBsum" id="1BCV"/>
<dbReference type="PDBsum" id="7D3R"/>
<dbReference type="SMR" id="P03308"/>
<dbReference type="MEROPS" id="C03.008"/>
<dbReference type="MEROPS" id="C28.001"/>
<dbReference type="TCDB" id="1.A.85.1.4">
    <property type="family name" value="the poliovirus 2b viroporin (2b viroporin) family"/>
</dbReference>
<dbReference type="EvolutionaryTrace" id="P03308"/>
<dbReference type="Proteomes" id="UP000007707">
    <property type="component" value="Genome"/>
</dbReference>
<dbReference type="Proteomes" id="UP000013587">
    <property type="component" value="Segment"/>
</dbReference>
<dbReference type="GO" id="GO:0044162">
    <property type="term" value="C:host cell cytoplasmic vesicle membrane"/>
    <property type="evidence" value="ECO:0007669"/>
    <property type="project" value="UniProtKB-SubCell"/>
</dbReference>
<dbReference type="GO" id="GO:0044167">
    <property type="term" value="C:host cell endoplasmic reticulum membrane"/>
    <property type="evidence" value="ECO:0007669"/>
    <property type="project" value="UniProtKB-SubCell"/>
</dbReference>
<dbReference type="GO" id="GO:0042025">
    <property type="term" value="C:host cell nucleus"/>
    <property type="evidence" value="ECO:0007669"/>
    <property type="project" value="UniProtKB-SubCell"/>
</dbReference>
<dbReference type="GO" id="GO:0016020">
    <property type="term" value="C:membrane"/>
    <property type="evidence" value="ECO:0007669"/>
    <property type="project" value="UniProtKB-KW"/>
</dbReference>
<dbReference type="GO" id="GO:0039618">
    <property type="term" value="C:T=pseudo3 icosahedral viral capsid"/>
    <property type="evidence" value="ECO:0007669"/>
    <property type="project" value="UniProtKB-KW"/>
</dbReference>
<dbReference type="GO" id="GO:0005524">
    <property type="term" value="F:ATP binding"/>
    <property type="evidence" value="ECO:0007669"/>
    <property type="project" value="UniProtKB-KW"/>
</dbReference>
<dbReference type="GO" id="GO:0015267">
    <property type="term" value="F:channel activity"/>
    <property type="evidence" value="ECO:0007669"/>
    <property type="project" value="UniProtKB-KW"/>
</dbReference>
<dbReference type="GO" id="GO:0004197">
    <property type="term" value="F:cysteine-type endopeptidase activity"/>
    <property type="evidence" value="ECO:0007669"/>
    <property type="project" value="UniProtKB-EC"/>
</dbReference>
<dbReference type="GO" id="GO:0017111">
    <property type="term" value="F:ribonucleoside triphosphate phosphatase activity"/>
    <property type="evidence" value="ECO:0007669"/>
    <property type="project" value="UniProtKB-EC"/>
</dbReference>
<dbReference type="GO" id="GO:0003723">
    <property type="term" value="F:RNA binding"/>
    <property type="evidence" value="ECO:0007669"/>
    <property type="project" value="UniProtKB-KW"/>
</dbReference>
<dbReference type="GO" id="GO:0003724">
    <property type="term" value="F:RNA helicase activity"/>
    <property type="evidence" value="ECO:0007669"/>
    <property type="project" value="InterPro"/>
</dbReference>
<dbReference type="GO" id="GO:0003968">
    <property type="term" value="F:RNA-directed RNA polymerase activity"/>
    <property type="evidence" value="ECO:0007669"/>
    <property type="project" value="UniProtKB-KW"/>
</dbReference>
<dbReference type="GO" id="GO:0005198">
    <property type="term" value="F:structural molecule activity"/>
    <property type="evidence" value="ECO:0007669"/>
    <property type="project" value="InterPro"/>
</dbReference>
<dbReference type="GO" id="GO:0075512">
    <property type="term" value="P:clathrin-dependent endocytosis of virus by host cell"/>
    <property type="evidence" value="ECO:0007669"/>
    <property type="project" value="UniProtKB-KW"/>
</dbReference>
<dbReference type="GO" id="GO:0006351">
    <property type="term" value="P:DNA-templated transcription"/>
    <property type="evidence" value="ECO:0007669"/>
    <property type="project" value="InterPro"/>
</dbReference>
<dbReference type="GO" id="GO:0034220">
    <property type="term" value="P:monoatomic ion transmembrane transport"/>
    <property type="evidence" value="ECO:0007669"/>
    <property type="project" value="UniProtKB-KW"/>
</dbReference>
<dbReference type="GO" id="GO:0006508">
    <property type="term" value="P:proteolysis"/>
    <property type="evidence" value="ECO:0007669"/>
    <property type="project" value="UniProtKB-KW"/>
</dbReference>
<dbReference type="GO" id="GO:0006417">
    <property type="term" value="P:regulation of translation"/>
    <property type="evidence" value="ECO:0007669"/>
    <property type="project" value="UniProtKB-KW"/>
</dbReference>
<dbReference type="GO" id="GO:0039520">
    <property type="term" value="P:symbiont-mediated activation of host autophagy"/>
    <property type="evidence" value="ECO:0000250"/>
    <property type="project" value="UniProtKB"/>
</dbReference>
<dbReference type="GO" id="GO:0039525">
    <property type="term" value="P:symbiont-mediated perturbation of host chromatin organization"/>
    <property type="evidence" value="ECO:0007669"/>
    <property type="project" value="UniProtKB-KW"/>
</dbReference>
<dbReference type="GO" id="GO:0019082">
    <property type="term" value="P:viral protein processing"/>
    <property type="evidence" value="ECO:0007669"/>
    <property type="project" value="InterPro"/>
</dbReference>
<dbReference type="GO" id="GO:0039694">
    <property type="term" value="P:viral RNA genome replication"/>
    <property type="evidence" value="ECO:0007669"/>
    <property type="project" value="InterPro"/>
</dbReference>
<dbReference type="GO" id="GO:0019062">
    <property type="term" value="P:virion attachment to host cell"/>
    <property type="evidence" value="ECO:0007669"/>
    <property type="project" value="UniProtKB-KW"/>
</dbReference>
<dbReference type="CDD" id="cd23210">
    <property type="entry name" value="Aphthovirus_RdRp"/>
    <property type="match status" value="1"/>
</dbReference>
<dbReference type="CDD" id="cd00205">
    <property type="entry name" value="rhv_like"/>
    <property type="match status" value="3"/>
</dbReference>
<dbReference type="FunFam" id="1.20.960.20:FF:000002">
    <property type="entry name" value="Genome polyprotein"/>
    <property type="match status" value="1"/>
</dbReference>
<dbReference type="FunFam" id="2.40.10.10:FF:000108">
    <property type="entry name" value="Genome polyprotein"/>
    <property type="match status" value="1"/>
</dbReference>
<dbReference type="FunFam" id="2.60.120.20:FF:000005">
    <property type="entry name" value="Genome polyprotein"/>
    <property type="match status" value="1"/>
</dbReference>
<dbReference type="FunFam" id="2.60.120.20:FF:000006">
    <property type="entry name" value="Genome polyprotein"/>
    <property type="match status" value="1"/>
</dbReference>
<dbReference type="FunFam" id="2.60.120.20:FF:000012">
    <property type="entry name" value="Genome polyprotein"/>
    <property type="match status" value="1"/>
</dbReference>
<dbReference type="FunFam" id="3.30.70.270:FF:000031">
    <property type="entry name" value="Genome polyprotein"/>
    <property type="match status" value="1"/>
</dbReference>
<dbReference type="Gene3D" id="1.20.960.20">
    <property type="match status" value="1"/>
</dbReference>
<dbReference type="Gene3D" id="2.60.120.20">
    <property type="match status" value="3"/>
</dbReference>
<dbReference type="Gene3D" id="3.30.70.270">
    <property type="match status" value="2"/>
</dbReference>
<dbReference type="Gene3D" id="4.10.90.10">
    <property type="entry name" value="Capsid protein VP4 superfamily, Picornavirus"/>
    <property type="match status" value="1"/>
</dbReference>
<dbReference type="Gene3D" id="3.90.70.10">
    <property type="entry name" value="Cysteine proteinases"/>
    <property type="match status" value="1"/>
</dbReference>
<dbReference type="Gene3D" id="2.40.10.10">
    <property type="entry name" value="Trypsin-like serine proteases"/>
    <property type="match status" value="2"/>
</dbReference>
<dbReference type="InterPro" id="IPR015031">
    <property type="entry name" value="Capsid_VP4_Picornavir"/>
</dbReference>
<dbReference type="InterPro" id="IPR037080">
    <property type="entry name" value="Capsid_VP4_sf_Picornavirus"/>
</dbReference>
<dbReference type="InterPro" id="IPR043502">
    <property type="entry name" value="DNA/RNA_pol_sf"/>
</dbReference>
<dbReference type="InterPro" id="IPR004080">
    <property type="entry name" value="FMDV_VP1_coat"/>
</dbReference>
<dbReference type="InterPro" id="IPR004004">
    <property type="entry name" value="Helic/Pol/Pept_Calicivir-typ"/>
</dbReference>
<dbReference type="InterPro" id="IPR000605">
    <property type="entry name" value="Helicase_SF3_ssDNA/RNA_vir"/>
</dbReference>
<dbReference type="InterPro" id="IPR014759">
    <property type="entry name" value="Helicase_SF3_ssRNA_vir"/>
</dbReference>
<dbReference type="InterPro" id="IPR027417">
    <property type="entry name" value="P-loop_NTPase"/>
</dbReference>
<dbReference type="InterPro" id="IPR038765">
    <property type="entry name" value="Papain-like_cys_pep_sf"/>
</dbReference>
<dbReference type="InterPro" id="IPR044067">
    <property type="entry name" value="PCV_3C_PRO"/>
</dbReference>
<dbReference type="InterPro" id="IPR008739">
    <property type="entry name" value="Peptidase_C28"/>
</dbReference>
<dbReference type="InterPro" id="IPR000199">
    <property type="entry name" value="Peptidase_C3A/C3B_picornavir"/>
</dbReference>
<dbReference type="InterPro" id="IPR009003">
    <property type="entry name" value="Peptidase_S1_PA"/>
</dbReference>
<dbReference type="InterPro" id="IPR043504">
    <property type="entry name" value="Peptidase_S1_PA_chymotrypsin"/>
</dbReference>
<dbReference type="InterPro" id="IPR001676">
    <property type="entry name" value="Picornavirus_capsid"/>
</dbReference>
<dbReference type="InterPro" id="IPR043128">
    <property type="entry name" value="Rev_trsase/Diguanyl_cyclase"/>
</dbReference>
<dbReference type="InterPro" id="IPR033703">
    <property type="entry name" value="Rhv-like"/>
</dbReference>
<dbReference type="InterPro" id="IPR001205">
    <property type="entry name" value="RNA-dir_pol_C"/>
</dbReference>
<dbReference type="InterPro" id="IPR007094">
    <property type="entry name" value="RNA-dir_pol_PSvirus"/>
</dbReference>
<dbReference type="InterPro" id="IPR029053">
    <property type="entry name" value="Viral_coat"/>
</dbReference>
<dbReference type="Pfam" id="PF05408">
    <property type="entry name" value="Peptidase_C28"/>
    <property type="match status" value="1"/>
</dbReference>
<dbReference type="Pfam" id="PF00548">
    <property type="entry name" value="Peptidase_C3"/>
    <property type="match status" value="1"/>
</dbReference>
<dbReference type="Pfam" id="PF00680">
    <property type="entry name" value="RdRP_1"/>
    <property type="match status" value="1"/>
</dbReference>
<dbReference type="Pfam" id="PF00073">
    <property type="entry name" value="Rhv"/>
    <property type="match status" value="2"/>
</dbReference>
<dbReference type="Pfam" id="PF22663">
    <property type="entry name" value="Rhv_5"/>
    <property type="match status" value="1"/>
</dbReference>
<dbReference type="Pfam" id="PF00910">
    <property type="entry name" value="RNA_helicase"/>
    <property type="match status" value="1"/>
</dbReference>
<dbReference type="Pfam" id="PF08935">
    <property type="entry name" value="VP4_2"/>
    <property type="match status" value="1"/>
</dbReference>
<dbReference type="PRINTS" id="PR00918">
    <property type="entry name" value="CALICVIRUSNS"/>
</dbReference>
<dbReference type="PRINTS" id="PR01542">
    <property type="entry name" value="FMDVP1COAT"/>
</dbReference>
<dbReference type="SUPFAM" id="SSF54001">
    <property type="entry name" value="Cysteine proteinases"/>
    <property type="match status" value="1"/>
</dbReference>
<dbReference type="SUPFAM" id="SSF56672">
    <property type="entry name" value="DNA/RNA polymerases"/>
    <property type="match status" value="1"/>
</dbReference>
<dbReference type="SUPFAM" id="SSF52540">
    <property type="entry name" value="P-loop containing nucleoside triphosphate hydrolases"/>
    <property type="match status" value="1"/>
</dbReference>
<dbReference type="SUPFAM" id="SSF88633">
    <property type="entry name" value="Positive stranded ssRNA viruses"/>
    <property type="match status" value="2"/>
</dbReference>
<dbReference type="SUPFAM" id="SSF50494">
    <property type="entry name" value="Trypsin-like serine proteases"/>
    <property type="match status" value="1"/>
</dbReference>
<dbReference type="PROSITE" id="PS51887">
    <property type="entry name" value="APHTHOVIRUS_LPRO"/>
    <property type="match status" value="1"/>
</dbReference>
<dbReference type="PROSITE" id="PS51874">
    <property type="entry name" value="PCV_3C_PRO"/>
    <property type="match status" value="1"/>
</dbReference>
<dbReference type="PROSITE" id="PS50507">
    <property type="entry name" value="RDRP_SSRNA_POS"/>
    <property type="match status" value="1"/>
</dbReference>
<dbReference type="PROSITE" id="PS51218">
    <property type="entry name" value="SF3_HELICASE_2"/>
    <property type="match status" value="1"/>
</dbReference>
<accession>P03308</accession>
<accession>P03312</accession>
<accession>Q65038</accession>
<accession>Q65039</accession>
<accession>Q65040</accession>
<accession>Q65041</accession>
<accession>Q65042</accession>
<accession>Q65043</accession>
<accession>Q65044</accession>
<accession>Q65045</accession>
<accession>Q65046</accession>
<accession>Q65047</accession>
<accession>Q6PN34</accession>